<gene>
    <name type="primary">SMAP1</name>
    <name type="ordered locus">At4g13520</name>
    <name type="ORF">T6G15.70</name>
</gene>
<proteinExistence type="evidence at protein level"/>
<dbReference type="EMBL" id="AL049656">
    <property type="protein sequence ID" value="CAB41110.1"/>
    <property type="molecule type" value="Genomic_DNA"/>
</dbReference>
<dbReference type="EMBL" id="AL161536">
    <property type="protein sequence ID" value="CAB78394.1"/>
    <property type="molecule type" value="Genomic_DNA"/>
</dbReference>
<dbReference type="EMBL" id="CP002687">
    <property type="protein sequence ID" value="AEE83288.1"/>
    <property type="molecule type" value="Genomic_DNA"/>
</dbReference>
<dbReference type="EMBL" id="CP002687">
    <property type="protein sequence ID" value="ANM67179.1"/>
    <property type="molecule type" value="Genomic_DNA"/>
</dbReference>
<dbReference type="EMBL" id="AF361862">
    <property type="protein sequence ID" value="AAK32874.1"/>
    <property type="molecule type" value="mRNA"/>
</dbReference>
<dbReference type="EMBL" id="AY088143">
    <property type="protein sequence ID" value="AAM65688.1"/>
    <property type="molecule type" value="mRNA"/>
</dbReference>
<dbReference type="EMBL" id="AY129486">
    <property type="protein sequence ID" value="AAM91072.1"/>
    <property type="molecule type" value="mRNA"/>
</dbReference>
<dbReference type="PIR" id="T06654">
    <property type="entry name" value="T06654"/>
</dbReference>
<dbReference type="RefSeq" id="NP_001329023.1">
    <property type="nucleotide sequence ID" value="NM_001340863.1"/>
</dbReference>
<dbReference type="RefSeq" id="NP_567406.1">
    <property type="nucleotide sequence ID" value="NM_117426.4"/>
</dbReference>
<dbReference type="BioGRID" id="12281">
    <property type="interactions" value="7"/>
</dbReference>
<dbReference type="FunCoup" id="Q9T0H2">
    <property type="interactions" value="397"/>
</dbReference>
<dbReference type="IntAct" id="Q9T0H2">
    <property type="interactions" value="1"/>
</dbReference>
<dbReference type="STRING" id="3702.Q9T0H2"/>
<dbReference type="PaxDb" id="3702-AT4G13520.1"/>
<dbReference type="ProteomicsDB" id="234588"/>
<dbReference type="EnsemblPlants" id="AT4G13520.1">
    <property type="protein sequence ID" value="AT4G13520.1"/>
    <property type="gene ID" value="AT4G13520"/>
</dbReference>
<dbReference type="EnsemblPlants" id="AT4G13520.2">
    <property type="protein sequence ID" value="AT4G13520.2"/>
    <property type="gene ID" value="AT4G13520"/>
</dbReference>
<dbReference type="GeneID" id="826984"/>
<dbReference type="Gramene" id="AT4G13520.1">
    <property type="protein sequence ID" value="AT4G13520.1"/>
    <property type="gene ID" value="AT4G13520"/>
</dbReference>
<dbReference type="Gramene" id="AT4G13520.2">
    <property type="protein sequence ID" value="AT4G13520.2"/>
    <property type="gene ID" value="AT4G13520"/>
</dbReference>
<dbReference type="KEGG" id="ath:AT4G13520"/>
<dbReference type="Araport" id="AT4G13520"/>
<dbReference type="TAIR" id="AT4G13520">
    <property type="gene designation" value="SMAP1"/>
</dbReference>
<dbReference type="eggNOG" id="ENOG502R1QA">
    <property type="taxonomic scope" value="Eukaryota"/>
</dbReference>
<dbReference type="HOGENOM" id="CLU_197800_0_0_1"/>
<dbReference type="InParanoid" id="Q9T0H2"/>
<dbReference type="OMA" id="VGHIESK"/>
<dbReference type="OrthoDB" id="1907763at2759"/>
<dbReference type="PhylomeDB" id="Q9T0H2"/>
<dbReference type="PRO" id="PR:Q9T0H2"/>
<dbReference type="Proteomes" id="UP000006548">
    <property type="component" value="Chromosome 4"/>
</dbReference>
<dbReference type="ExpressionAtlas" id="Q9T0H2">
    <property type="expression patterns" value="baseline and differential"/>
</dbReference>
<dbReference type="GO" id="GO:0009734">
    <property type="term" value="P:auxin-activated signaling pathway"/>
    <property type="evidence" value="ECO:0007669"/>
    <property type="project" value="UniProtKB-KW"/>
</dbReference>
<dbReference type="GO" id="GO:0040029">
    <property type="term" value="P:epigenetic regulation of gene expression"/>
    <property type="evidence" value="ECO:0000270"/>
    <property type="project" value="TAIR"/>
</dbReference>
<dbReference type="GO" id="GO:0009733">
    <property type="term" value="P:response to auxin"/>
    <property type="evidence" value="ECO:0000315"/>
    <property type="project" value="TAIR"/>
</dbReference>
<evidence type="ECO:0000269" key="1">
    <source>
    </source>
</evidence>
<evidence type="ECO:0000269" key="2">
    <source>
    </source>
</evidence>
<evidence type="ECO:0000269" key="3">
    <source>
    </source>
</evidence>
<comment type="function">
    <text evidence="1 3">Mediates responses to the synthetic auxin 2,4-dichlorophenoxyacetic acid (2,4-D). Not involved in the response to indole-3-acetic acid (IAA). Interacts with RUB modification-related components and may regulate the cullin-ring ubiquitin E3 ligase complex (CRL) activity.</text>
</comment>
<comment type="subunit">
    <text evidence="3">Interacts with the COP9 signalosome.</text>
</comment>
<comment type="tissue specificity">
    <text evidence="2">Expressed in roots, flowers, siliques, stems, leaves and seeds. In flowers, detected in petals, anthers and pistils.</text>
</comment>
<comment type="domain">
    <text evidence="3">The F/D-rich region (45-62) is necessary but not sufficient for SMAP1 function.</text>
</comment>
<comment type="disruption phenotype">
    <text evidence="1">No visible phenotype, except a longer hypocotyl in light-grown seedlings.</text>
</comment>
<protein>
    <recommendedName>
        <fullName>Small acidic protein 1</fullName>
    </recommendedName>
</protein>
<accession>Q9T0H2</accession>
<organism>
    <name type="scientific">Arabidopsis thaliana</name>
    <name type="common">Mouse-ear cress</name>
    <dbReference type="NCBI Taxonomy" id="3702"/>
    <lineage>
        <taxon>Eukaryota</taxon>
        <taxon>Viridiplantae</taxon>
        <taxon>Streptophyta</taxon>
        <taxon>Embryophyta</taxon>
        <taxon>Tracheophyta</taxon>
        <taxon>Spermatophyta</taxon>
        <taxon>Magnoliopsida</taxon>
        <taxon>eudicotyledons</taxon>
        <taxon>Gunneridae</taxon>
        <taxon>Pentapetalae</taxon>
        <taxon>rosids</taxon>
        <taxon>malvids</taxon>
        <taxon>Brassicales</taxon>
        <taxon>Brassicaceae</taxon>
        <taxon>Camelineae</taxon>
        <taxon>Arabidopsis</taxon>
    </lineage>
</organism>
<sequence length="62" mass="6942">MRPMQLDMLSEMDDAGSSMAMDVDDLEAMEILNEGGLVSDNKLADADFFNKFDDDFDDTDIN</sequence>
<feature type="chain" id="PRO_0000420767" description="Small acidic protein 1">
    <location>
        <begin position="1"/>
        <end position="62"/>
    </location>
</feature>
<keyword id="KW-0927">Auxin signaling pathway</keyword>
<keyword id="KW-1185">Reference proteome</keyword>
<reference key="1">
    <citation type="journal article" date="1999" name="Nature">
        <title>Sequence and analysis of chromosome 4 of the plant Arabidopsis thaliana.</title>
        <authorList>
            <person name="Mayer K.F.X."/>
            <person name="Schueller C."/>
            <person name="Wambutt R."/>
            <person name="Murphy G."/>
            <person name="Volckaert G."/>
            <person name="Pohl T."/>
            <person name="Duesterhoeft A."/>
            <person name="Stiekema W."/>
            <person name="Entian K.-D."/>
            <person name="Terryn N."/>
            <person name="Harris B."/>
            <person name="Ansorge W."/>
            <person name="Brandt P."/>
            <person name="Grivell L.A."/>
            <person name="Rieger M."/>
            <person name="Weichselgartner M."/>
            <person name="de Simone V."/>
            <person name="Obermaier B."/>
            <person name="Mache R."/>
            <person name="Mueller M."/>
            <person name="Kreis M."/>
            <person name="Delseny M."/>
            <person name="Puigdomenech P."/>
            <person name="Watson M."/>
            <person name="Schmidtheini T."/>
            <person name="Reichert B."/>
            <person name="Portetelle D."/>
            <person name="Perez-Alonso M."/>
            <person name="Boutry M."/>
            <person name="Bancroft I."/>
            <person name="Vos P."/>
            <person name="Hoheisel J."/>
            <person name="Zimmermann W."/>
            <person name="Wedler H."/>
            <person name="Ridley P."/>
            <person name="Langham S.-A."/>
            <person name="McCullagh B."/>
            <person name="Bilham L."/>
            <person name="Robben J."/>
            <person name="van der Schueren J."/>
            <person name="Grymonprez B."/>
            <person name="Chuang Y.-J."/>
            <person name="Vandenbussche F."/>
            <person name="Braeken M."/>
            <person name="Weltjens I."/>
            <person name="Voet M."/>
            <person name="Bastiaens I."/>
            <person name="Aert R."/>
            <person name="Defoor E."/>
            <person name="Weitzenegger T."/>
            <person name="Bothe G."/>
            <person name="Ramsperger U."/>
            <person name="Hilbert H."/>
            <person name="Braun M."/>
            <person name="Holzer E."/>
            <person name="Brandt A."/>
            <person name="Peters S."/>
            <person name="van Staveren M."/>
            <person name="Dirkse W."/>
            <person name="Mooijman P."/>
            <person name="Klein Lankhorst R."/>
            <person name="Rose M."/>
            <person name="Hauf J."/>
            <person name="Koetter P."/>
            <person name="Berneiser S."/>
            <person name="Hempel S."/>
            <person name="Feldpausch M."/>
            <person name="Lamberth S."/>
            <person name="Van den Daele H."/>
            <person name="De Keyser A."/>
            <person name="Buysshaert C."/>
            <person name="Gielen J."/>
            <person name="Villarroel R."/>
            <person name="De Clercq R."/>
            <person name="van Montagu M."/>
            <person name="Rogers J."/>
            <person name="Cronin A."/>
            <person name="Quail M.A."/>
            <person name="Bray-Allen S."/>
            <person name="Clark L."/>
            <person name="Doggett J."/>
            <person name="Hall S."/>
            <person name="Kay M."/>
            <person name="Lennard N."/>
            <person name="McLay K."/>
            <person name="Mayes R."/>
            <person name="Pettett A."/>
            <person name="Rajandream M.A."/>
            <person name="Lyne M."/>
            <person name="Benes V."/>
            <person name="Rechmann S."/>
            <person name="Borkova D."/>
            <person name="Bloecker H."/>
            <person name="Scharfe M."/>
            <person name="Grimm M."/>
            <person name="Loehnert T.-H."/>
            <person name="Dose S."/>
            <person name="de Haan M."/>
            <person name="Maarse A.C."/>
            <person name="Schaefer M."/>
            <person name="Mueller-Auer S."/>
            <person name="Gabel C."/>
            <person name="Fuchs M."/>
            <person name="Fartmann B."/>
            <person name="Granderath K."/>
            <person name="Dauner D."/>
            <person name="Herzl A."/>
            <person name="Neumann S."/>
            <person name="Argiriou A."/>
            <person name="Vitale D."/>
            <person name="Liguori R."/>
            <person name="Piravandi E."/>
            <person name="Massenet O."/>
            <person name="Quigley F."/>
            <person name="Clabauld G."/>
            <person name="Muendlein A."/>
            <person name="Felber R."/>
            <person name="Schnabl S."/>
            <person name="Hiller R."/>
            <person name="Schmidt W."/>
            <person name="Lecharny A."/>
            <person name="Aubourg S."/>
            <person name="Chefdor F."/>
            <person name="Cooke R."/>
            <person name="Berger C."/>
            <person name="Monfort A."/>
            <person name="Casacuberta E."/>
            <person name="Gibbons T."/>
            <person name="Weber N."/>
            <person name="Vandenbol M."/>
            <person name="Bargues M."/>
            <person name="Terol J."/>
            <person name="Torres A."/>
            <person name="Perez-Perez A."/>
            <person name="Purnelle B."/>
            <person name="Bent E."/>
            <person name="Johnson S."/>
            <person name="Tacon D."/>
            <person name="Jesse T."/>
            <person name="Heijnen L."/>
            <person name="Schwarz S."/>
            <person name="Scholler P."/>
            <person name="Heber S."/>
            <person name="Francs P."/>
            <person name="Bielke C."/>
            <person name="Frishman D."/>
            <person name="Haase D."/>
            <person name="Lemcke K."/>
            <person name="Mewes H.-W."/>
            <person name="Stocker S."/>
            <person name="Zaccaria P."/>
            <person name="Bevan M."/>
            <person name="Wilson R.K."/>
            <person name="de la Bastide M."/>
            <person name="Habermann K."/>
            <person name="Parnell L."/>
            <person name="Dedhia N."/>
            <person name="Gnoj L."/>
            <person name="Schutz K."/>
            <person name="Huang E."/>
            <person name="Spiegel L."/>
            <person name="Sekhon M."/>
            <person name="Murray J."/>
            <person name="Sheet P."/>
            <person name="Cordes M."/>
            <person name="Abu-Threideh J."/>
            <person name="Stoneking T."/>
            <person name="Kalicki J."/>
            <person name="Graves T."/>
            <person name="Harmon G."/>
            <person name="Edwards J."/>
            <person name="Latreille P."/>
            <person name="Courtney L."/>
            <person name="Cloud J."/>
            <person name="Abbott A."/>
            <person name="Scott K."/>
            <person name="Johnson D."/>
            <person name="Minx P."/>
            <person name="Bentley D."/>
            <person name="Fulton B."/>
            <person name="Miller N."/>
            <person name="Greco T."/>
            <person name="Kemp K."/>
            <person name="Kramer J."/>
            <person name="Fulton L."/>
            <person name="Mardis E."/>
            <person name="Dante M."/>
            <person name="Pepin K."/>
            <person name="Hillier L.W."/>
            <person name="Nelson J."/>
            <person name="Spieth J."/>
            <person name="Ryan E."/>
            <person name="Andrews S."/>
            <person name="Geisel C."/>
            <person name="Layman D."/>
            <person name="Du H."/>
            <person name="Ali J."/>
            <person name="Berghoff A."/>
            <person name="Jones K."/>
            <person name="Drone K."/>
            <person name="Cotton M."/>
            <person name="Joshu C."/>
            <person name="Antonoiu B."/>
            <person name="Zidanic M."/>
            <person name="Strong C."/>
            <person name="Sun H."/>
            <person name="Lamar B."/>
            <person name="Yordan C."/>
            <person name="Ma P."/>
            <person name="Zhong J."/>
            <person name="Preston R."/>
            <person name="Vil D."/>
            <person name="Shekher M."/>
            <person name="Matero A."/>
            <person name="Shah R."/>
            <person name="Swaby I.K."/>
            <person name="O'Shaughnessy A."/>
            <person name="Rodriguez M."/>
            <person name="Hoffman J."/>
            <person name="Till S."/>
            <person name="Granat S."/>
            <person name="Shohdy N."/>
            <person name="Hasegawa A."/>
            <person name="Hameed A."/>
            <person name="Lodhi M."/>
            <person name="Johnson A."/>
            <person name="Chen E."/>
            <person name="Marra M.A."/>
            <person name="Martienssen R."/>
            <person name="McCombie W.R."/>
        </authorList>
    </citation>
    <scope>NUCLEOTIDE SEQUENCE [LARGE SCALE GENOMIC DNA]</scope>
    <source>
        <strain>cv. Columbia</strain>
    </source>
</reference>
<reference key="2">
    <citation type="journal article" date="2017" name="Plant J.">
        <title>Araport11: a complete reannotation of the Arabidopsis thaliana reference genome.</title>
        <authorList>
            <person name="Cheng C.Y."/>
            <person name="Krishnakumar V."/>
            <person name="Chan A.P."/>
            <person name="Thibaud-Nissen F."/>
            <person name="Schobel S."/>
            <person name="Town C.D."/>
        </authorList>
    </citation>
    <scope>GENOME REANNOTATION</scope>
    <source>
        <strain>cv. Columbia</strain>
    </source>
</reference>
<reference key="3">
    <citation type="journal article" date="2003" name="Science">
        <title>Empirical analysis of transcriptional activity in the Arabidopsis genome.</title>
        <authorList>
            <person name="Yamada K."/>
            <person name="Lim J."/>
            <person name="Dale J.M."/>
            <person name="Chen H."/>
            <person name="Shinn P."/>
            <person name="Palm C.J."/>
            <person name="Southwick A.M."/>
            <person name="Wu H.C."/>
            <person name="Kim C.J."/>
            <person name="Nguyen M."/>
            <person name="Pham P.K."/>
            <person name="Cheuk R.F."/>
            <person name="Karlin-Newmann G."/>
            <person name="Liu S.X."/>
            <person name="Lam B."/>
            <person name="Sakano H."/>
            <person name="Wu T."/>
            <person name="Yu G."/>
            <person name="Miranda M."/>
            <person name="Quach H.L."/>
            <person name="Tripp M."/>
            <person name="Chang C.H."/>
            <person name="Lee J.M."/>
            <person name="Toriumi M.J."/>
            <person name="Chan M.M."/>
            <person name="Tang C.C."/>
            <person name="Onodera C.S."/>
            <person name="Deng J.M."/>
            <person name="Akiyama K."/>
            <person name="Ansari Y."/>
            <person name="Arakawa T."/>
            <person name="Banh J."/>
            <person name="Banno F."/>
            <person name="Bowser L."/>
            <person name="Brooks S.Y."/>
            <person name="Carninci P."/>
            <person name="Chao Q."/>
            <person name="Choy N."/>
            <person name="Enju A."/>
            <person name="Goldsmith A.D."/>
            <person name="Gurjal M."/>
            <person name="Hansen N.F."/>
            <person name="Hayashizaki Y."/>
            <person name="Johnson-Hopson C."/>
            <person name="Hsuan V.W."/>
            <person name="Iida K."/>
            <person name="Karnes M."/>
            <person name="Khan S."/>
            <person name="Koesema E."/>
            <person name="Ishida J."/>
            <person name="Jiang P.X."/>
            <person name="Jones T."/>
            <person name="Kawai J."/>
            <person name="Kamiya A."/>
            <person name="Meyers C."/>
            <person name="Nakajima M."/>
            <person name="Narusaka M."/>
            <person name="Seki M."/>
            <person name="Sakurai T."/>
            <person name="Satou M."/>
            <person name="Tamse R."/>
            <person name="Vaysberg M."/>
            <person name="Wallender E.K."/>
            <person name="Wong C."/>
            <person name="Yamamura Y."/>
            <person name="Yuan S."/>
            <person name="Shinozaki K."/>
            <person name="Davis R.W."/>
            <person name="Theologis A."/>
            <person name="Ecker J.R."/>
        </authorList>
    </citation>
    <scope>NUCLEOTIDE SEQUENCE [LARGE SCALE MRNA]</scope>
    <source>
        <strain>cv. Columbia</strain>
    </source>
</reference>
<reference key="4">
    <citation type="submission" date="2002-03" db="EMBL/GenBank/DDBJ databases">
        <title>Full-length cDNA from Arabidopsis thaliana.</title>
        <authorList>
            <person name="Brover V.V."/>
            <person name="Troukhan M.E."/>
            <person name="Alexandrov N.A."/>
            <person name="Lu Y.-P."/>
            <person name="Flavell R.B."/>
            <person name="Feldmann K.A."/>
        </authorList>
    </citation>
    <scope>NUCLEOTIDE SEQUENCE [LARGE SCALE MRNA]</scope>
</reference>
<reference key="5">
    <citation type="journal article" date="2006" name="Plant J.">
        <title>A small acidic protein 1 (SMAP1) mediates responses of the Arabidopsis root to the synthetic auxin 2,4-dichlorophenoxyacetic acid.</title>
        <authorList>
            <person name="Rahman A."/>
            <person name="Nakasone A."/>
            <person name="Chhun T."/>
            <person name="Ooura C."/>
            <person name="Biswas K.K."/>
            <person name="Uchimiya H."/>
            <person name="Tsurumi S."/>
            <person name="Baskin T.I."/>
            <person name="Tanaka A."/>
            <person name="Oono Y."/>
        </authorList>
    </citation>
    <scope>IDENTIFICATION</scope>
    <scope>FUNCTION</scope>
    <scope>DISRUPTION PHENOTYPE</scope>
    <source>
        <strain>cv. Columbia</strain>
    </source>
</reference>
<reference key="6">
    <citation type="journal article" date="2009" name="J. Plant Physiol.">
        <title>A gene encoding SMALL ACIDIC PROTEIN 2 potentially mediates the response to synthetic auxin, 2,4-dichlorophenoxyacetic acid, in Arabidopsis thaliana.</title>
        <authorList>
            <person name="Nakasone A."/>
            <person name="Kawai-Yamada M."/>
            <person name="Kiyosue T."/>
            <person name="Narumi I."/>
            <person name="Uchimiya H."/>
            <person name="Oono Y."/>
        </authorList>
    </citation>
    <scope>TISSUE SPECIFICITY</scope>
    <source>
        <strain>cv. Columbia</strain>
    </source>
</reference>
<reference key="7">
    <citation type="journal article" date="2012" name="Plant Physiol.">
        <title>SMALL ACIDIC PROTEIN1 acts with RUB modification components, the COP9 signalosome, and AXR1 to regulate growth and development of Arabidopsis.</title>
        <authorList>
            <person name="Nakasone A."/>
            <person name="Fujiwara M."/>
            <person name="Fukao Y."/>
            <person name="Biswas K.K."/>
            <person name="Rahman A."/>
            <person name="Kawai-Yamada M."/>
            <person name="Narumi I."/>
            <person name="Uchimiya H."/>
            <person name="Oono Y."/>
        </authorList>
    </citation>
    <scope>FUNCTION</scope>
    <scope>DOMAIN</scope>
    <scope>INTERACTION WITH COP9 SIGNALOSOME</scope>
    <source>
        <strain>cv. Columbia</strain>
    </source>
</reference>
<name>SMAP1_ARATH</name>